<dbReference type="EC" id="3.6.5.n1" evidence="1"/>
<dbReference type="EMBL" id="CP000458">
    <property type="protein sequence ID" value="ABK07884.1"/>
    <property type="molecule type" value="Genomic_DNA"/>
</dbReference>
<dbReference type="RefSeq" id="WP_011544942.1">
    <property type="nucleotide sequence ID" value="NC_008542.1"/>
</dbReference>
<dbReference type="SMR" id="A0K5V7"/>
<dbReference type="GeneID" id="83047884"/>
<dbReference type="KEGG" id="bch:Bcen2424_1132"/>
<dbReference type="HOGENOM" id="CLU_009995_3_3_4"/>
<dbReference type="GO" id="GO:0005886">
    <property type="term" value="C:plasma membrane"/>
    <property type="evidence" value="ECO:0007669"/>
    <property type="project" value="UniProtKB-SubCell"/>
</dbReference>
<dbReference type="GO" id="GO:0005525">
    <property type="term" value="F:GTP binding"/>
    <property type="evidence" value="ECO:0007669"/>
    <property type="project" value="UniProtKB-UniRule"/>
</dbReference>
<dbReference type="GO" id="GO:0003924">
    <property type="term" value="F:GTPase activity"/>
    <property type="evidence" value="ECO:0007669"/>
    <property type="project" value="UniProtKB-UniRule"/>
</dbReference>
<dbReference type="GO" id="GO:0097216">
    <property type="term" value="F:guanosine tetraphosphate binding"/>
    <property type="evidence" value="ECO:0007669"/>
    <property type="project" value="UniProtKB-ARBA"/>
</dbReference>
<dbReference type="GO" id="GO:0043022">
    <property type="term" value="F:ribosome binding"/>
    <property type="evidence" value="ECO:0007669"/>
    <property type="project" value="UniProtKB-UniRule"/>
</dbReference>
<dbReference type="GO" id="GO:0003746">
    <property type="term" value="F:translation elongation factor activity"/>
    <property type="evidence" value="ECO:0007669"/>
    <property type="project" value="UniProtKB-UniRule"/>
</dbReference>
<dbReference type="GO" id="GO:0045727">
    <property type="term" value="P:positive regulation of translation"/>
    <property type="evidence" value="ECO:0007669"/>
    <property type="project" value="UniProtKB-UniRule"/>
</dbReference>
<dbReference type="CDD" id="cd03699">
    <property type="entry name" value="EF4_II"/>
    <property type="match status" value="1"/>
</dbReference>
<dbReference type="CDD" id="cd16260">
    <property type="entry name" value="EF4_III"/>
    <property type="match status" value="1"/>
</dbReference>
<dbReference type="CDD" id="cd01890">
    <property type="entry name" value="LepA"/>
    <property type="match status" value="1"/>
</dbReference>
<dbReference type="CDD" id="cd03709">
    <property type="entry name" value="lepA_C"/>
    <property type="match status" value="1"/>
</dbReference>
<dbReference type="FunFam" id="3.40.50.300:FF:000078">
    <property type="entry name" value="Elongation factor 4"/>
    <property type="match status" value="1"/>
</dbReference>
<dbReference type="FunFam" id="2.40.30.10:FF:000015">
    <property type="entry name" value="Translation factor GUF1, mitochondrial"/>
    <property type="match status" value="1"/>
</dbReference>
<dbReference type="FunFam" id="3.30.70.240:FF:000007">
    <property type="entry name" value="Translation factor GUF1, mitochondrial"/>
    <property type="match status" value="1"/>
</dbReference>
<dbReference type="FunFam" id="3.30.70.2570:FF:000001">
    <property type="entry name" value="Translation factor GUF1, mitochondrial"/>
    <property type="match status" value="1"/>
</dbReference>
<dbReference type="FunFam" id="3.30.70.870:FF:000004">
    <property type="entry name" value="Translation factor GUF1, mitochondrial"/>
    <property type="match status" value="1"/>
</dbReference>
<dbReference type="Gene3D" id="3.30.70.240">
    <property type="match status" value="1"/>
</dbReference>
<dbReference type="Gene3D" id="3.30.70.2570">
    <property type="entry name" value="Elongation factor 4, C-terminal domain"/>
    <property type="match status" value="1"/>
</dbReference>
<dbReference type="Gene3D" id="3.30.70.870">
    <property type="entry name" value="Elongation Factor G (Translational Gtpase), domain 3"/>
    <property type="match status" value="1"/>
</dbReference>
<dbReference type="Gene3D" id="3.40.50.300">
    <property type="entry name" value="P-loop containing nucleotide triphosphate hydrolases"/>
    <property type="match status" value="1"/>
</dbReference>
<dbReference type="Gene3D" id="2.40.30.10">
    <property type="entry name" value="Translation factors"/>
    <property type="match status" value="1"/>
</dbReference>
<dbReference type="HAMAP" id="MF_00071">
    <property type="entry name" value="LepA"/>
    <property type="match status" value="1"/>
</dbReference>
<dbReference type="InterPro" id="IPR006297">
    <property type="entry name" value="EF-4"/>
</dbReference>
<dbReference type="InterPro" id="IPR035647">
    <property type="entry name" value="EFG_III/V"/>
</dbReference>
<dbReference type="InterPro" id="IPR000640">
    <property type="entry name" value="EFG_V-like"/>
</dbReference>
<dbReference type="InterPro" id="IPR004161">
    <property type="entry name" value="EFTu-like_2"/>
</dbReference>
<dbReference type="InterPro" id="IPR031157">
    <property type="entry name" value="G_TR_CS"/>
</dbReference>
<dbReference type="InterPro" id="IPR038363">
    <property type="entry name" value="LepA_C_sf"/>
</dbReference>
<dbReference type="InterPro" id="IPR013842">
    <property type="entry name" value="LepA_CTD"/>
</dbReference>
<dbReference type="InterPro" id="IPR035654">
    <property type="entry name" value="LepA_IV"/>
</dbReference>
<dbReference type="InterPro" id="IPR027417">
    <property type="entry name" value="P-loop_NTPase"/>
</dbReference>
<dbReference type="InterPro" id="IPR005225">
    <property type="entry name" value="Small_GTP-bd"/>
</dbReference>
<dbReference type="InterPro" id="IPR000795">
    <property type="entry name" value="T_Tr_GTP-bd_dom"/>
</dbReference>
<dbReference type="InterPro" id="IPR009000">
    <property type="entry name" value="Transl_B-barrel_sf"/>
</dbReference>
<dbReference type="NCBIfam" id="TIGR01393">
    <property type="entry name" value="lepA"/>
    <property type="match status" value="1"/>
</dbReference>
<dbReference type="NCBIfam" id="TIGR00231">
    <property type="entry name" value="small_GTP"/>
    <property type="match status" value="1"/>
</dbReference>
<dbReference type="PANTHER" id="PTHR43512:SF4">
    <property type="entry name" value="TRANSLATION FACTOR GUF1 HOMOLOG, CHLOROPLASTIC"/>
    <property type="match status" value="1"/>
</dbReference>
<dbReference type="PANTHER" id="PTHR43512">
    <property type="entry name" value="TRANSLATION FACTOR GUF1-RELATED"/>
    <property type="match status" value="1"/>
</dbReference>
<dbReference type="Pfam" id="PF00679">
    <property type="entry name" value="EFG_C"/>
    <property type="match status" value="1"/>
</dbReference>
<dbReference type="Pfam" id="PF00009">
    <property type="entry name" value="GTP_EFTU"/>
    <property type="match status" value="1"/>
</dbReference>
<dbReference type="Pfam" id="PF03144">
    <property type="entry name" value="GTP_EFTU_D2"/>
    <property type="match status" value="1"/>
</dbReference>
<dbReference type="Pfam" id="PF06421">
    <property type="entry name" value="LepA_C"/>
    <property type="match status" value="1"/>
</dbReference>
<dbReference type="PRINTS" id="PR00315">
    <property type="entry name" value="ELONGATNFCT"/>
</dbReference>
<dbReference type="SMART" id="SM00838">
    <property type="entry name" value="EFG_C"/>
    <property type="match status" value="1"/>
</dbReference>
<dbReference type="SUPFAM" id="SSF54980">
    <property type="entry name" value="EF-G C-terminal domain-like"/>
    <property type="match status" value="2"/>
</dbReference>
<dbReference type="SUPFAM" id="SSF52540">
    <property type="entry name" value="P-loop containing nucleoside triphosphate hydrolases"/>
    <property type="match status" value="1"/>
</dbReference>
<dbReference type="SUPFAM" id="SSF50447">
    <property type="entry name" value="Translation proteins"/>
    <property type="match status" value="1"/>
</dbReference>
<dbReference type="PROSITE" id="PS00301">
    <property type="entry name" value="G_TR_1"/>
    <property type="match status" value="1"/>
</dbReference>
<dbReference type="PROSITE" id="PS51722">
    <property type="entry name" value="G_TR_2"/>
    <property type="match status" value="1"/>
</dbReference>
<organism>
    <name type="scientific">Burkholderia cenocepacia (strain HI2424)</name>
    <dbReference type="NCBI Taxonomy" id="331272"/>
    <lineage>
        <taxon>Bacteria</taxon>
        <taxon>Pseudomonadati</taxon>
        <taxon>Pseudomonadota</taxon>
        <taxon>Betaproteobacteria</taxon>
        <taxon>Burkholderiales</taxon>
        <taxon>Burkholderiaceae</taxon>
        <taxon>Burkholderia</taxon>
        <taxon>Burkholderia cepacia complex</taxon>
    </lineage>
</organism>
<proteinExistence type="inferred from homology"/>
<sequence>MDHIRNFSIIAHIDHGKSTLADRIIQVCGGLADREMEAQVLDSMDIERERGITIKAQTAALSYRARDGKVYNLNLIDTPGHVDFSYEVSRSLSACEGALLVVDASQGVEAQTVANCYTAIELGVEVVPVLNKIDLPAANPENAIEEIEDVIGIDATDATRCSAKTGLGVEDVLESLIAKVPPPKGDPAAPLQALIIDSWFDNYVGVVMLVRIVNGTLRPKDKIKMMATGAQYPVEHVGVFTPKSRNLDSLSAGQVGFIIAGIKELTAAKVGDTVTHAAKAAAEPLPGFKEVKPQVFAGLYPVEANQYDALRESLEKLKLNDASLQYEPEVSQALGFGFRCGFLGLLHMEIVQERLEREFDMDLITTAPTVVYEVVQSDGSTIMVENPAKMPEPGRIAEVREPIVTVNLYMPQDYVGSVITLCEQKRGSQINMQYHGRQVQLTYEIPMAEIVLDFFDRLKSVSRGYASMDYEFKEYRSSDVVKVDMLINGDKVDALSIIVHRSQSQYRGREVAAKMREIIPRQMYDVAIQAAIGAHIVARENIKALRKNVLAKCYGGDITRKKKLLEKQKEGKKRMKQVGSVEIPQEAFLAILRVEDK</sequence>
<name>LEPA_BURCH</name>
<keyword id="KW-0997">Cell inner membrane</keyword>
<keyword id="KW-1003">Cell membrane</keyword>
<keyword id="KW-0342">GTP-binding</keyword>
<keyword id="KW-0378">Hydrolase</keyword>
<keyword id="KW-0472">Membrane</keyword>
<keyword id="KW-0547">Nucleotide-binding</keyword>
<keyword id="KW-0648">Protein biosynthesis</keyword>
<comment type="function">
    <text evidence="1">Required for accurate and efficient protein synthesis under certain stress conditions. May act as a fidelity factor of the translation reaction, by catalyzing a one-codon backward translocation of tRNAs on improperly translocated ribosomes. Back-translocation proceeds from a post-translocation (POST) complex to a pre-translocation (PRE) complex, thus giving elongation factor G a second chance to translocate the tRNAs correctly. Binds to ribosomes in a GTP-dependent manner.</text>
</comment>
<comment type="catalytic activity">
    <reaction evidence="1">
        <text>GTP + H2O = GDP + phosphate + H(+)</text>
        <dbReference type="Rhea" id="RHEA:19669"/>
        <dbReference type="ChEBI" id="CHEBI:15377"/>
        <dbReference type="ChEBI" id="CHEBI:15378"/>
        <dbReference type="ChEBI" id="CHEBI:37565"/>
        <dbReference type="ChEBI" id="CHEBI:43474"/>
        <dbReference type="ChEBI" id="CHEBI:58189"/>
        <dbReference type="EC" id="3.6.5.n1"/>
    </reaction>
</comment>
<comment type="subcellular location">
    <subcellularLocation>
        <location evidence="1">Cell inner membrane</location>
        <topology evidence="1">Peripheral membrane protein</topology>
        <orientation evidence="1">Cytoplasmic side</orientation>
    </subcellularLocation>
</comment>
<comment type="similarity">
    <text evidence="1">Belongs to the TRAFAC class translation factor GTPase superfamily. Classic translation factor GTPase family. LepA subfamily.</text>
</comment>
<reference key="1">
    <citation type="submission" date="2006-08" db="EMBL/GenBank/DDBJ databases">
        <title>Complete sequence of chromosome 1 of Burkholderia cenocepacia HI2424.</title>
        <authorList>
            <person name="Copeland A."/>
            <person name="Lucas S."/>
            <person name="Lapidus A."/>
            <person name="Barry K."/>
            <person name="Detter J.C."/>
            <person name="Glavina del Rio T."/>
            <person name="Hammon N."/>
            <person name="Israni S."/>
            <person name="Pitluck S."/>
            <person name="Chain P."/>
            <person name="Malfatti S."/>
            <person name="Shin M."/>
            <person name="Vergez L."/>
            <person name="Schmutz J."/>
            <person name="Larimer F."/>
            <person name="Land M."/>
            <person name="Hauser L."/>
            <person name="Kyrpides N."/>
            <person name="Kim E."/>
            <person name="LiPuma J.J."/>
            <person name="Gonzalez C.F."/>
            <person name="Konstantinidis K."/>
            <person name="Tiedje J.M."/>
            <person name="Richardson P."/>
        </authorList>
    </citation>
    <scope>NUCLEOTIDE SEQUENCE [LARGE SCALE GENOMIC DNA]</scope>
    <source>
        <strain>HI2424</strain>
    </source>
</reference>
<protein>
    <recommendedName>
        <fullName evidence="1">Elongation factor 4</fullName>
        <shortName evidence="1">EF-4</shortName>
        <ecNumber evidence="1">3.6.5.n1</ecNumber>
    </recommendedName>
    <alternativeName>
        <fullName evidence="1">Ribosomal back-translocase LepA</fullName>
    </alternativeName>
</protein>
<gene>
    <name evidence="1" type="primary">lepA</name>
    <name type="ordered locus">Bcen2424_1132</name>
</gene>
<accession>A0K5V7</accession>
<feature type="chain" id="PRO_1000031972" description="Elongation factor 4">
    <location>
        <begin position="1"/>
        <end position="597"/>
    </location>
</feature>
<feature type="domain" description="tr-type G">
    <location>
        <begin position="2"/>
        <end position="184"/>
    </location>
</feature>
<feature type="binding site" evidence="1">
    <location>
        <begin position="14"/>
        <end position="19"/>
    </location>
    <ligand>
        <name>GTP</name>
        <dbReference type="ChEBI" id="CHEBI:37565"/>
    </ligand>
</feature>
<feature type="binding site" evidence="1">
    <location>
        <begin position="131"/>
        <end position="134"/>
    </location>
    <ligand>
        <name>GTP</name>
        <dbReference type="ChEBI" id="CHEBI:37565"/>
    </ligand>
</feature>
<evidence type="ECO:0000255" key="1">
    <source>
        <dbReference type="HAMAP-Rule" id="MF_00071"/>
    </source>
</evidence>